<evidence type="ECO:0000250" key="1"/>
<evidence type="ECO:0000305" key="2"/>
<protein>
    <recommendedName>
        <fullName>Flagellar hook-basal body complex protein FliE</fullName>
    </recommendedName>
</protein>
<accession>Q44337</accession>
<comment type="subcellular location">
    <subcellularLocation>
        <location evidence="1">Bacterial flagellum basal body</location>
    </subcellularLocation>
</comment>
<comment type="similarity">
    <text evidence="2">Belongs to the FliE family.</text>
</comment>
<dbReference type="EMBL" id="U39941">
    <property type="protein sequence ID" value="AAB68967.1"/>
    <property type="molecule type" value="Genomic_DNA"/>
</dbReference>
<dbReference type="EMBL" id="U95165">
    <property type="protein sequence ID" value="AAB71789.1"/>
    <property type="molecule type" value="Genomic_DNA"/>
</dbReference>
<dbReference type="EMBL" id="AE007869">
    <property type="protein sequence ID" value="AAK86365.1"/>
    <property type="molecule type" value="Genomic_DNA"/>
</dbReference>
<dbReference type="PIR" id="AD2644">
    <property type="entry name" value="AD2644"/>
</dbReference>
<dbReference type="PIR" id="D97426">
    <property type="entry name" value="D97426"/>
</dbReference>
<dbReference type="RefSeq" id="NP_353580.1">
    <property type="nucleotide sequence ID" value="NC_003062.2"/>
</dbReference>
<dbReference type="RefSeq" id="WP_006313017.1">
    <property type="nucleotide sequence ID" value="NC_003062.2"/>
</dbReference>
<dbReference type="SMR" id="Q44337"/>
<dbReference type="STRING" id="176299.Atu0553"/>
<dbReference type="EnsemblBacteria" id="AAK86365">
    <property type="protein sequence ID" value="AAK86365"/>
    <property type="gene ID" value="Atu0553"/>
</dbReference>
<dbReference type="GeneID" id="1132591"/>
<dbReference type="KEGG" id="atu:Atu0553"/>
<dbReference type="PATRIC" id="fig|176299.10.peg.549"/>
<dbReference type="eggNOG" id="COG1677">
    <property type="taxonomic scope" value="Bacteria"/>
</dbReference>
<dbReference type="HOGENOM" id="CLU_147249_2_0_5"/>
<dbReference type="OrthoDB" id="9812413at2"/>
<dbReference type="PhylomeDB" id="Q44337"/>
<dbReference type="BioCyc" id="AGRO:ATU0553-MONOMER"/>
<dbReference type="Proteomes" id="UP000000813">
    <property type="component" value="Chromosome circular"/>
</dbReference>
<dbReference type="GO" id="GO:0009425">
    <property type="term" value="C:bacterial-type flagellum basal body"/>
    <property type="evidence" value="ECO:0000303"/>
    <property type="project" value="PAMGO_GAT"/>
</dbReference>
<dbReference type="GO" id="GO:0003774">
    <property type="term" value="F:cytoskeletal motor activity"/>
    <property type="evidence" value="ECO:0007669"/>
    <property type="project" value="InterPro"/>
</dbReference>
<dbReference type="GO" id="GO:0005198">
    <property type="term" value="F:structural molecule activity"/>
    <property type="evidence" value="ECO:0007669"/>
    <property type="project" value="InterPro"/>
</dbReference>
<dbReference type="GO" id="GO:0071973">
    <property type="term" value="P:bacterial-type flagellum-dependent cell motility"/>
    <property type="evidence" value="ECO:0007669"/>
    <property type="project" value="InterPro"/>
</dbReference>
<dbReference type="HAMAP" id="MF_00724">
    <property type="entry name" value="FliE"/>
    <property type="match status" value="1"/>
</dbReference>
<dbReference type="InterPro" id="IPR001624">
    <property type="entry name" value="FliE"/>
</dbReference>
<dbReference type="PANTHER" id="PTHR34653">
    <property type="match status" value="1"/>
</dbReference>
<dbReference type="PANTHER" id="PTHR34653:SF1">
    <property type="entry name" value="FLAGELLAR HOOK-BASAL BODY COMPLEX PROTEIN FLIE"/>
    <property type="match status" value="1"/>
</dbReference>
<dbReference type="Pfam" id="PF02049">
    <property type="entry name" value="FliE"/>
    <property type="match status" value="1"/>
</dbReference>
<gene>
    <name type="primary">fliE</name>
    <name type="ordered locus">Atu0553</name>
    <name type="ORF">AGR_C_974</name>
</gene>
<sequence>MIDGIKQLGSLSLTRGASGVSSLTESLFGGEQQSTPAQQTGASFASVLGNVSMDAMNNLKKAEVASFEGIQGKANTREVVDAVLSAEQSLQTAIALRDKIVSAYLDITKMQI</sequence>
<feature type="chain" id="PRO_0000105526" description="Flagellar hook-basal body complex protein FliE">
    <location>
        <begin position="1"/>
        <end position="112"/>
    </location>
</feature>
<proteinExistence type="inferred from homology"/>
<organism>
    <name type="scientific">Agrobacterium fabrum (strain C58 / ATCC 33970)</name>
    <name type="common">Agrobacterium tumefaciens (strain C58)</name>
    <dbReference type="NCBI Taxonomy" id="176299"/>
    <lineage>
        <taxon>Bacteria</taxon>
        <taxon>Pseudomonadati</taxon>
        <taxon>Pseudomonadota</taxon>
        <taxon>Alphaproteobacteria</taxon>
        <taxon>Hyphomicrobiales</taxon>
        <taxon>Rhizobiaceae</taxon>
        <taxon>Rhizobium/Agrobacterium group</taxon>
        <taxon>Agrobacterium</taxon>
        <taxon>Agrobacterium tumefaciens complex</taxon>
    </lineage>
</organism>
<keyword id="KW-0975">Bacterial flagellum</keyword>
<keyword id="KW-1185">Reference proteome</keyword>
<name>FLIE_AGRFC</name>
<reference key="1">
    <citation type="journal article" date="1997" name="Gene">
        <title>Isolation and characterisation of a linked cluster of genes from Agrobacterium tumefaciens encoding proteins involved in flagellar basal-body structure.</title>
        <authorList>
            <person name="Deakin W.J."/>
            <person name="Furniss C.S."/>
            <person name="Parker V.E."/>
            <person name="Shaw C.H."/>
        </authorList>
    </citation>
    <scope>NUCLEOTIDE SEQUENCE [GENOMIC DNA]</scope>
</reference>
<reference key="2">
    <citation type="journal article" date="2001" name="Science">
        <title>The genome of the natural genetic engineer Agrobacterium tumefaciens C58.</title>
        <authorList>
            <person name="Wood D.W."/>
            <person name="Setubal J.C."/>
            <person name="Kaul R."/>
            <person name="Monks D.E."/>
            <person name="Kitajima J.P."/>
            <person name="Okura V.K."/>
            <person name="Zhou Y."/>
            <person name="Chen L."/>
            <person name="Wood G.E."/>
            <person name="Almeida N.F. Jr."/>
            <person name="Woo L."/>
            <person name="Chen Y."/>
            <person name="Paulsen I.T."/>
            <person name="Eisen J.A."/>
            <person name="Karp P.D."/>
            <person name="Bovee D. Sr."/>
            <person name="Chapman P."/>
            <person name="Clendenning J."/>
            <person name="Deatherage G."/>
            <person name="Gillet W."/>
            <person name="Grant C."/>
            <person name="Kutyavin T."/>
            <person name="Levy R."/>
            <person name="Li M.-J."/>
            <person name="McClelland E."/>
            <person name="Palmieri A."/>
            <person name="Raymond C."/>
            <person name="Rouse G."/>
            <person name="Saenphimmachak C."/>
            <person name="Wu Z."/>
            <person name="Romero P."/>
            <person name="Gordon D."/>
            <person name="Zhang S."/>
            <person name="Yoo H."/>
            <person name="Tao Y."/>
            <person name="Biddle P."/>
            <person name="Jung M."/>
            <person name="Krespan W."/>
            <person name="Perry M."/>
            <person name="Gordon-Kamm B."/>
            <person name="Liao L."/>
            <person name="Kim S."/>
            <person name="Hendrick C."/>
            <person name="Zhao Z.-Y."/>
            <person name="Dolan M."/>
            <person name="Chumley F."/>
            <person name="Tingey S.V."/>
            <person name="Tomb J.-F."/>
            <person name="Gordon M.P."/>
            <person name="Olson M.V."/>
            <person name="Nester E.W."/>
        </authorList>
    </citation>
    <scope>NUCLEOTIDE SEQUENCE [LARGE SCALE GENOMIC DNA]</scope>
    <source>
        <strain>C58 / ATCC 33970</strain>
    </source>
</reference>
<reference key="3">
    <citation type="journal article" date="2001" name="Science">
        <title>Genome sequence of the plant pathogen and biotechnology agent Agrobacterium tumefaciens C58.</title>
        <authorList>
            <person name="Goodner B."/>
            <person name="Hinkle G."/>
            <person name="Gattung S."/>
            <person name="Miller N."/>
            <person name="Blanchard M."/>
            <person name="Qurollo B."/>
            <person name="Goldman B.S."/>
            <person name="Cao Y."/>
            <person name="Askenazi M."/>
            <person name="Halling C."/>
            <person name="Mullin L."/>
            <person name="Houmiel K."/>
            <person name="Gordon J."/>
            <person name="Vaudin M."/>
            <person name="Iartchouk O."/>
            <person name="Epp A."/>
            <person name="Liu F."/>
            <person name="Wollam C."/>
            <person name="Allinger M."/>
            <person name="Doughty D."/>
            <person name="Scott C."/>
            <person name="Lappas C."/>
            <person name="Markelz B."/>
            <person name="Flanagan C."/>
            <person name="Crowell C."/>
            <person name="Gurson J."/>
            <person name="Lomo C."/>
            <person name="Sear C."/>
            <person name="Strub G."/>
            <person name="Cielo C."/>
            <person name="Slater S."/>
        </authorList>
    </citation>
    <scope>NUCLEOTIDE SEQUENCE [LARGE SCALE GENOMIC DNA]</scope>
    <source>
        <strain>C58 / ATCC 33970</strain>
    </source>
</reference>